<feature type="chain" id="PRO_0000458087" description="Kinesin-like protein klp-12">
    <location>
        <begin position="1"/>
        <end position="1605"/>
    </location>
</feature>
<feature type="domain" description="Kinesin motor" evidence="3">
    <location>
        <begin position="5"/>
        <end position="358"/>
    </location>
</feature>
<feature type="repeat" description="WD 1" evidence="2">
    <location>
        <begin position="1282"/>
        <end position="1319"/>
    </location>
</feature>
<feature type="repeat" description="WD 2" evidence="1">
    <location>
        <begin position="1389"/>
        <end position="1427"/>
    </location>
</feature>
<feature type="repeat" description="WD 3" evidence="1">
    <location>
        <begin position="1525"/>
        <end position="1566"/>
    </location>
</feature>
<feature type="repeat" description="WD 4" evidence="1">
    <location>
        <begin position="1573"/>
        <end position="1605"/>
    </location>
</feature>
<feature type="region of interest" description="Disordered" evidence="4">
    <location>
        <begin position="548"/>
        <end position="596"/>
    </location>
</feature>
<feature type="region of interest" description="Disordered" evidence="4">
    <location>
        <begin position="1085"/>
        <end position="1152"/>
    </location>
</feature>
<feature type="region of interest" description="Disordered" evidence="4">
    <location>
        <begin position="1198"/>
        <end position="1232"/>
    </location>
</feature>
<feature type="coiled-coil region" evidence="1">
    <location>
        <begin position="575"/>
        <end position="730"/>
    </location>
</feature>
<feature type="compositionally biased region" description="Polar residues" evidence="4">
    <location>
        <begin position="550"/>
        <end position="559"/>
    </location>
</feature>
<feature type="compositionally biased region" description="Acidic residues" evidence="4">
    <location>
        <begin position="560"/>
        <end position="596"/>
    </location>
</feature>
<feature type="compositionally biased region" description="Polar residues" evidence="4">
    <location>
        <begin position="1116"/>
        <end position="1152"/>
    </location>
</feature>
<feature type="compositionally biased region" description="Low complexity" evidence="4">
    <location>
        <begin position="1200"/>
        <end position="1232"/>
    </location>
</feature>
<feature type="binding site" evidence="3 7 9">
    <location>
        <begin position="84"/>
        <end position="91"/>
    </location>
    <ligand>
        <name>ATP</name>
        <dbReference type="ChEBI" id="CHEBI:30616"/>
    </ligand>
</feature>
<feature type="binding site" evidence="5 9">
    <location>
        <position position="91"/>
    </location>
    <ligand>
        <name>Mg(2+)</name>
        <dbReference type="ChEBI" id="CHEBI:18420"/>
    </ligand>
</feature>
<feature type="binding site" evidence="5 9">
    <location>
        <position position="217"/>
    </location>
    <ligand>
        <name>Mg(2+)</name>
        <dbReference type="ChEBI" id="CHEBI:18420"/>
    </ligand>
</feature>
<feature type="splice variant" id="VSP_061914" description="In isoform d.">
    <location>
        <begin position="1"/>
        <end position="1268"/>
    </location>
</feature>
<feature type="splice variant" id="VSP_061915" description="In isoform e.">
    <location>
        <begin position="1114"/>
        <end position="1257"/>
    </location>
</feature>
<feature type="splice variant" id="VSP_061916" description="In isoform c.">
    <location>
        <begin position="1233"/>
        <end position="1257"/>
    </location>
</feature>
<feature type="sequence conflict" description="In Ref. 1; BAB18763." evidence="6" ref="1">
    <original>MADTCVQVALR</original>
    <variation>MNFSGNDRDLISVKS</variation>
    <location>
        <begin position="1"/>
        <end position="11"/>
    </location>
</feature>
<feature type="sequence conflict" description="In Ref. 1; BAB18763." evidence="6" ref="1">
    <original>QKE</original>
    <variation>PKN</variation>
    <location>
        <begin position="104"/>
        <end position="106"/>
    </location>
</feature>
<feature type="sequence conflict" description="In Ref. 1; BAB18763." evidence="6" ref="1">
    <original>L</original>
    <variation>Q</variation>
    <location>
        <position position="330"/>
    </location>
</feature>
<feature type="sequence conflict" description="In Ref. 1; BAB18763." evidence="6" ref="1">
    <original>V</original>
    <variation>D</variation>
    <location>
        <position position="793"/>
    </location>
</feature>
<feature type="sequence conflict" description="In Ref. 1; BAB18763." evidence="6" ref="1">
    <original>Y</original>
    <variation>C</variation>
    <location>
        <position position="897"/>
    </location>
</feature>
<feature type="sequence conflict" description="In Ref. 1; BAB18763." evidence="6" ref="1">
    <original>D</original>
    <variation>V</variation>
    <location>
        <position position="1400"/>
    </location>
</feature>
<feature type="strand" evidence="15">
    <location>
        <begin position="7"/>
        <end position="12"/>
    </location>
</feature>
<feature type="helix" evidence="15">
    <location>
        <begin position="17"/>
        <end position="21"/>
    </location>
</feature>
<feature type="strand" evidence="15">
    <location>
        <begin position="35"/>
        <end position="39"/>
    </location>
</feature>
<feature type="turn" evidence="15">
    <location>
        <begin position="40"/>
        <end position="42"/>
    </location>
</feature>
<feature type="strand" evidence="15">
    <location>
        <begin position="43"/>
        <end position="46"/>
    </location>
</feature>
<feature type="strand" evidence="15">
    <location>
        <begin position="48"/>
        <end position="51"/>
    </location>
</feature>
<feature type="helix" evidence="15">
    <location>
        <begin position="57"/>
        <end position="64"/>
    </location>
</feature>
<feature type="helix" evidence="15">
    <location>
        <begin position="66"/>
        <end position="73"/>
    </location>
</feature>
<feature type="strand" evidence="15">
    <location>
        <begin position="78"/>
        <end position="85"/>
    </location>
</feature>
<feature type="helix" evidence="15">
    <location>
        <begin position="90"/>
        <end position="94"/>
    </location>
</feature>
<feature type="helix" evidence="15">
    <location>
        <begin position="111"/>
        <end position="127"/>
    </location>
</feature>
<feature type="strand" evidence="15">
    <location>
        <begin position="139"/>
        <end position="149"/>
    </location>
</feature>
<feature type="strand" evidence="15">
    <location>
        <begin position="154"/>
        <end position="156"/>
    </location>
</feature>
<feature type="strand" evidence="15">
    <location>
        <begin position="169"/>
        <end position="172"/>
    </location>
</feature>
<feature type="strand" evidence="15">
    <location>
        <begin position="174"/>
        <end position="176"/>
    </location>
</feature>
<feature type="strand" evidence="15">
    <location>
        <begin position="178"/>
        <end position="181"/>
    </location>
</feature>
<feature type="helix" evidence="15">
    <location>
        <begin position="191"/>
        <end position="202"/>
    </location>
</feature>
<feature type="strand" evidence="15">
    <location>
        <begin position="207"/>
        <end position="210"/>
    </location>
</feature>
<feature type="strand" evidence="15">
    <location>
        <begin position="213"/>
        <end position="217"/>
    </location>
</feature>
<feature type="strand" evidence="15">
    <location>
        <begin position="219"/>
        <end position="230"/>
    </location>
</feature>
<feature type="strand" evidence="15">
    <location>
        <begin position="256"/>
        <end position="261"/>
    </location>
</feature>
<feature type="helix" evidence="15">
    <location>
        <begin position="268"/>
        <end position="271"/>
    </location>
</feature>
<feature type="helix" evidence="15">
    <location>
        <begin position="276"/>
        <end position="297"/>
    </location>
</feature>
<feature type="helix" evidence="15">
    <location>
        <begin position="310"/>
        <end position="312"/>
    </location>
</feature>
<feature type="helix" evidence="15">
    <location>
        <begin position="314"/>
        <end position="318"/>
    </location>
</feature>
<feature type="helix" evidence="15">
    <location>
        <begin position="320"/>
        <end position="324"/>
    </location>
</feature>
<feature type="strand" evidence="15">
    <location>
        <begin position="325"/>
        <end position="335"/>
    </location>
</feature>
<feature type="helix" evidence="15">
    <location>
        <begin position="342"/>
        <end position="355"/>
    </location>
</feature>
<name>KLP12_CAEEL</name>
<proteinExistence type="evidence at protein level"/>
<comment type="function">
    <text evidence="5">Microtubule-binding motor protein which has ATPase activity (PubMed:36065637). In complex with alpha and beta tubulins, preferentially binds to the growing microtubule plus-end to stabilize it and detaches following ATP hydrolysis (PubMed:36065637). Negatively regulates axonal length through inhibiting microtubule polymerization at its plus-end (PubMed:36065637).</text>
</comment>
<comment type="subunit">
    <text evidence="5">Component of a complex at least composed of alpha tubulin and beta tubulin (PubMed:36065637). Within the complex, interacts with the alpha tubulin and beta tubulin dimer (PubMed:36065637).</text>
</comment>
<comment type="subcellular location">
    <subcellularLocation>
        <location evidence="5">Cytoplasm</location>
        <location evidence="5">Cytoskeleton</location>
    </subcellularLocation>
    <text evidence="5">Localizes to microtubules and to the growing microtubule plus-end.</text>
</comment>
<comment type="alternative products">
    <event type="alternative splicing"/>
    <isoform>
        <id>G5EGS3-1</id>
        <name evidence="11">a</name>
        <sequence type="displayed"/>
    </isoform>
    <isoform>
        <id>G5EGS3-3</id>
        <name evidence="12">c</name>
        <sequence type="described" ref="VSP_061916"/>
    </isoform>
    <isoform>
        <id>G5EGS3-4</id>
        <name evidence="13">d</name>
        <sequence type="described" ref="VSP_061914"/>
    </isoform>
    <isoform>
        <id>G5EGS3-5</id>
        <name evidence="14">e</name>
        <sequence type="described" ref="VSP_061915"/>
    </isoform>
</comment>
<comment type="similarity">
    <text evidence="3">Belongs to the TRAFAC class myosin-kinesin ATPase superfamily. Kinesin family.</text>
</comment>
<comment type="sequence caution" evidence="6">
    <conflict type="erroneous gene model prediction">
        <sequence resource="EMBL-CDS" id="BAB18763"/>
    </conflict>
</comment>
<gene>
    <name evidence="11" type="primary">klp-12</name>
    <name evidence="11" type="ORF">T01G1.1</name>
</gene>
<reference evidence="8" key="1">
    <citation type="submission" date="1999-12" db="EMBL/GenBank/DDBJ databases">
        <title>C. elegans Kinesin Like Protein, KLP-12.</title>
        <authorList>
            <person name="Ali M.Y."/>
            <person name="Siddiqui S.S."/>
        </authorList>
    </citation>
    <scope>NUCLEOTIDE SEQUENCE [MRNA]</scope>
</reference>
<reference evidence="10" key="2">
    <citation type="journal article" date="1998" name="Science">
        <title>Genome sequence of the nematode C. elegans: a platform for investigating biology.</title>
        <authorList>
            <consortium name="The C. elegans sequencing consortium"/>
        </authorList>
    </citation>
    <scope>NUCLEOTIDE SEQUENCE [LARGE SCALE GENOMIC DNA]</scope>
    <source>
        <strain evidence="10">Bristol N2</strain>
    </source>
</reference>
<reference evidence="9" key="3">
    <citation type="journal article" date="2022" name="Elife">
        <title>Structural model of microtubule dynamics inhibition by kinesin-4 from the crystal structure of KLP-12 -tubulin complex.</title>
        <authorList>
            <person name="Taguchi S."/>
            <person name="Nakano J."/>
            <person name="Imasaki T."/>
            <person name="Kita T."/>
            <person name="Saijo-Hamano Y."/>
            <person name="Sakai N."/>
            <person name="Shigematsu H."/>
            <person name="Okuma H."/>
            <person name="Shimizu T."/>
            <person name="Nitta E."/>
            <person name="Kikkawa S."/>
            <person name="Mizobuchi S."/>
            <person name="Niwa S."/>
            <person name="Nitta R."/>
        </authorList>
    </citation>
    <scope>X-RAY CRYSTALLOGRAPHY (2.88 ANGSTROMS) OF 1-365 IN COMPLEX WITH PIG TUBA1A; PIG BETA TUBULIN; ATP ANALOG AND MAGNESIUM</scope>
    <scope>FUNCTION</scope>
    <scope>CATALYTIC ACTIVITY</scope>
    <scope>IDENTIFICATION IN COMPLEX WITH ALPHA TUBULIN AND BETA TUBULIN</scope>
    <scope>INTERACTION WITH ALPHA TUBULIN AND BETA TUBULIN</scope>
    <scope>SUBCELLULAR LOCATION</scope>
</reference>
<accession>G5EGS3</accession>
<accession>A0A486WUN2</accession>
<accession>B3GWD7</accession>
<accession>G5EFJ0</accession>
<accession>Q9GRC3</accession>
<keyword id="KW-0002">3D-structure</keyword>
<keyword id="KW-0025">Alternative splicing</keyword>
<keyword id="KW-0067">ATP-binding</keyword>
<keyword id="KW-0175">Coiled coil</keyword>
<keyword id="KW-0963">Cytoplasm</keyword>
<keyword id="KW-0206">Cytoskeleton</keyword>
<keyword id="KW-0378">Hydrolase</keyword>
<keyword id="KW-0493">Microtubule</keyword>
<keyword id="KW-0505">Motor protein</keyword>
<keyword id="KW-0547">Nucleotide-binding</keyword>
<keyword id="KW-1185">Reference proteome</keyword>
<keyword id="KW-0677">Repeat</keyword>
<keyword id="KW-0853">WD repeat</keyword>
<sequence>MADTCVQVALRIRPQGNREKLEGSRVCTSVLPNDPQVTIGGDRSFTYDHVFDMPTLQYVVYESCVEKLVDGLFDGYNATVLAYGQTGSGKTHTMGTAFDAAVTQKEEDLGVIPRAIQHTFRKIAECKAQAIEQGLLEPAFEVSVQFVELYNDDVLDLLSDDRSMSSSIRIHEDSRGEIVLHGVEQRSVFDMHGTMDILKNGALNRTVAATNMNEQSSRSHAIFTLHLKQQRVAANPLDESGEQKTGELEMEMLCAKFHFVDLAGSERMKRTGATGDRAKEGISINVGLLALGNVIAALGGANGKVSHVPYRDSKLTRLLQDSLGGNSRTLMIACCSPSDSDFVETLNTMKYANRAKEIKNKVVANQDKSSKMIGELRSRIAALEAELLEFKQGRRTVDVDGHEVVNDQYHENVYLTSEVNHLRFRVKALNETLDILRTENIDLKAKQEFNSIASLPTAGSGGAEGEVDAIQSTFRKYLEELERTKSLLYESQSTCDQLRKDNARWKALGASRGSGGGNAEFNSQKLIEMAKQEVEKQRKLMESVNIGGENVSSEYSSMAQDEDGTSNEAEELLDEEDLDEDEDETAEEKQEQEESEALQIDLSEVMIELDIKEKLIDQLERAERQNQQIRETYEKKLRELMERIKDTETERDRVLNEGGKRGGNNEQMKAIKQEYELKITDLRKELKKIEALDKEHLKVIAKSQRELQEKTRLKSEVVDLKKAKVELIKKMNEDKKKQKTQQLANARAFATKEKQTRLQANKIRTLEMKDKQREQFLKKTTQEVNALRKEKAVAAATARQANRGTPRGGAAVTNSPARRVRGVVGGVQAIKELAFSAKASKVKWDVIVRKIEESARRRQIVQKMEAELERYLNERHAVMVEIVENEKQFTQSQDVIYRDGLLEAIDSAKQKLQYVQDQITYQQKLICDVDEDITASNAENEPILDVGLKKQTIKQLFDGCDTLSEARYLLQHLFDLCIDKAALAAKVESEFKECAARIEQLEQQSSLKEQLLTSIIEDKNLVDEIEGFVPSDLRKSRTSSQSSLLRSGSPSVVEDAHTLQNYKVRRHTATQEELLFANSEENSMVSDANANPTVDVGADVGDSDERKEKKKRIAFVSTSPASTSFANSTSQSPSFSRNTRFRSTVGGVSNNNNIRKSVQPLINGKGVSSTARKGISRLPSVTEDPEIGIFAKSFPGRSRSNLMSSSSSTTTTTLSSSNLLNPRGTTSSSSSKSVFARISPSWLSDTCAELIMRNNNRKQSRIVPVKDGMRGNVITRTHTLEGHARGVLSVDVNEKLMVTGSKDRTAKLWDIEACREIRTLGIHPNNVHLVKFVPFSNYVFTFSMFEARAWDYRTPECICVKVLNSSGQVNEGDSIDVSQVMPRQNTIPFLETLITAADVDPTGQLLFTSFSAYVRVWNLREWKPLGRLNAASHSPKSEVSCLRTTMTPEGSILAYTGSRDHYVKEYEVGLGTGVIESKCEFTPPHYDNVTAVLPLNGHLYTASKDVNIMKFSLKDGKREHLELRAHQQYIQSLTGFGPKGKELLVSACKDGTIRFWDVGSSSRMKLVEEYSKAHQEGINDMCSTKSMLFTASGDSTVGFWKSNAV</sequence>
<organism evidence="10">
    <name type="scientific">Caenorhabditis elegans</name>
    <dbReference type="NCBI Taxonomy" id="6239"/>
    <lineage>
        <taxon>Eukaryota</taxon>
        <taxon>Metazoa</taxon>
        <taxon>Ecdysozoa</taxon>
        <taxon>Nematoda</taxon>
        <taxon>Chromadorea</taxon>
        <taxon>Rhabditida</taxon>
        <taxon>Rhabditina</taxon>
        <taxon>Rhabditomorpha</taxon>
        <taxon>Rhabditoidea</taxon>
        <taxon>Rhabditidae</taxon>
        <taxon>Peloderinae</taxon>
        <taxon>Caenorhabditis</taxon>
    </lineage>
</organism>
<evidence type="ECO:0000255" key="1"/>
<evidence type="ECO:0000255" key="2">
    <source>
        <dbReference type="PROSITE-ProRule" id="PRU00221"/>
    </source>
</evidence>
<evidence type="ECO:0000255" key="3">
    <source>
        <dbReference type="PROSITE-ProRule" id="PRU00283"/>
    </source>
</evidence>
<evidence type="ECO:0000256" key="4">
    <source>
        <dbReference type="SAM" id="MobiDB-lite"/>
    </source>
</evidence>
<evidence type="ECO:0000269" key="5">
    <source>
    </source>
</evidence>
<evidence type="ECO:0000305" key="6"/>
<evidence type="ECO:0000305" key="7">
    <source>
    </source>
</evidence>
<evidence type="ECO:0000312" key="8">
    <source>
        <dbReference type="EMBL" id="BAB18763.1"/>
    </source>
</evidence>
<evidence type="ECO:0000312" key="9">
    <source>
        <dbReference type="PDB" id="7X4N"/>
    </source>
</evidence>
<evidence type="ECO:0000312" key="10">
    <source>
        <dbReference type="Proteomes" id="UP000001940"/>
    </source>
</evidence>
<evidence type="ECO:0000312" key="11">
    <source>
        <dbReference type="WormBase" id="T01G1.1a"/>
    </source>
</evidence>
<evidence type="ECO:0000312" key="12">
    <source>
        <dbReference type="WormBase" id="T01G1.1c"/>
    </source>
</evidence>
<evidence type="ECO:0000312" key="13">
    <source>
        <dbReference type="WormBase" id="T01G1.1d"/>
    </source>
</evidence>
<evidence type="ECO:0000312" key="14">
    <source>
        <dbReference type="WormBase" id="T01G1.1e"/>
    </source>
</evidence>
<evidence type="ECO:0007829" key="15">
    <source>
        <dbReference type="PDB" id="7X4N"/>
    </source>
</evidence>
<protein>
    <recommendedName>
        <fullName evidence="11">Kinesin-like protein klp-12</fullName>
        <ecNumber evidence="5">3.6.4.-</ecNumber>
    </recommendedName>
</protein>
<dbReference type="EC" id="3.6.4.-" evidence="5"/>
<dbReference type="EMBL" id="AB035591">
    <property type="protein sequence ID" value="BAB18763.1"/>
    <property type="status" value="ALT_SEQ"/>
    <property type="molecule type" value="mRNA"/>
</dbReference>
<dbReference type="EMBL" id="BX284604">
    <property type="protein sequence ID" value="CAB07273.2"/>
    <property type="molecule type" value="Genomic_DNA"/>
</dbReference>
<dbReference type="EMBL" id="BX284604">
    <property type="protein sequence ID" value="CAN86600.1"/>
    <property type="molecule type" value="Genomic_DNA"/>
</dbReference>
<dbReference type="EMBL" id="BX284604">
    <property type="protein sequence ID" value="CAQ58111.1"/>
    <property type="molecule type" value="Genomic_DNA"/>
</dbReference>
<dbReference type="EMBL" id="BX284604">
    <property type="protein sequence ID" value="VGM69513.1"/>
    <property type="molecule type" value="Genomic_DNA"/>
</dbReference>
<dbReference type="PIR" id="T22661">
    <property type="entry name" value="T22661"/>
</dbReference>
<dbReference type="RefSeq" id="NP_001023349.1">
    <molecule id="G5EGS3-1"/>
    <property type="nucleotide sequence ID" value="NM_001028178.5"/>
</dbReference>
<dbReference type="RefSeq" id="NP_001122796.1">
    <molecule id="G5EGS3-3"/>
    <property type="nucleotide sequence ID" value="NM_001129324.3"/>
</dbReference>
<dbReference type="RefSeq" id="NP_001129866.1">
    <molecule id="G5EGS3-4"/>
    <property type="nucleotide sequence ID" value="NM_001136394.4"/>
</dbReference>
<dbReference type="RefSeq" id="NP_001360493.1">
    <molecule id="G5EGS3-5"/>
    <property type="nucleotide sequence ID" value="NM_001372925.2"/>
</dbReference>
<dbReference type="PDB" id="7X4N">
    <property type="method" value="X-ray"/>
    <property type="resolution" value="2.88 A"/>
    <property type="chains" value="R=1-365"/>
</dbReference>
<dbReference type="PDBsum" id="7X4N"/>
<dbReference type="SMR" id="G5EGS3"/>
<dbReference type="FunCoup" id="G5EGS3">
    <property type="interactions" value="731"/>
</dbReference>
<dbReference type="IntAct" id="G5EGS3">
    <property type="interactions" value="1"/>
</dbReference>
<dbReference type="STRING" id="6239.T01G1.1a.1"/>
<dbReference type="PaxDb" id="6239-T01G1.1a"/>
<dbReference type="EnsemblMetazoa" id="T01G1.1a.1">
    <molecule id="G5EGS3-1"/>
    <property type="protein sequence ID" value="T01G1.1a.1"/>
    <property type="gene ID" value="WBGene00002223"/>
</dbReference>
<dbReference type="EnsemblMetazoa" id="T01G1.1c.1">
    <molecule id="G5EGS3-3"/>
    <property type="protein sequence ID" value="T01G1.1c.1"/>
    <property type="gene ID" value="WBGene00002223"/>
</dbReference>
<dbReference type="EnsemblMetazoa" id="T01G1.1d.1">
    <molecule id="G5EGS3-4"/>
    <property type="protein sequence ID" value="T01G1.1d.1"/>
    <property type="gene ID" value="WBGene00002223"/>
</dbReference>
<dbReference type="EnsemblMetazoa" id="T01G1.1e.1">
    <molecule id="G5EGS3-5"/>
    <property type="protein sequence ID" value="T01G1.1e.1"/>
    <property type="gene ID" value="WBGene00002223"/>
</dbReference>
<dbReference type="GeneID" id="178057"/>
<dbReference type="KEGG" id="cel:CELE_T01G1.1"/>
<dbReference type="AGR" id="WB:WBGene00002223"/>
<dbReference type="CTD" id="178057"/>
<dbReference type="WormBase" id="T01G1.1a">
    <molecule id="G5EGS3-1"/>
    <property type="protein sequence ID" value="CE37926"/>
    <property type="gene ID" value="WBGene00002223"/>
    <property type="gene designation" value="klp-12"/>
</dbReference>
<dbReference type="WormBase" id="T01G1.1c">
    <molecule id="G5EGS3-3"/>
    <property type="protein sequence ID" value="CE40999"/>
    <property type="gene ID" value="WBGene00002223"/>
    <property type="gene designation" value="klp-12"/>
</dbReference>
<dbReference type="WormBase" id="T01G1.1d">
    <molecule id="G5EGS3-4"/>
    <property type="protein sequence ID" value="CE42645"/>
    <property type="gene ID" value="WBGene00002223"/>
    <property type="gene designation" value="klp-12"/>
</dbReference>
<dbReference type="WormBase" id="T01G1.1e">
    <molecule id="G5EGS3-5"/>
    <property type="protein sequence ID" value="CE53084"/>
    <property type="gene ID" value="WBGene00002223"/>
    <property type="gene designation" value="klp-12"/>
</dbReference>
<dbReference type="eggNOG" id="KOG0244">
    <property type="taxonomic scope" value="Eukaryota"/>
</dbReference>
<dbReference type="GeneTree" id="ENSGT00940000174041"/>
<dbReference type="HOGENOM" id="CLU_001485_4_3_1"/>
<dbReference type="InParanoid" id="G5EGS3"/>
<dbReference type="OMA" id="QVAHTDV"/>
<dbReference type="OrthoDB" id="3176171at2759"/>
<dbReference type="PhylomeDB" id="G5EGS3"/>
<dbReference type="Reactome" id="R-CEL-6811434">
    <property type="pathway name" value="COPI-dependent Golgi-to-ER retrograde traffic"/>
</dbReference>
<dbReference type="Reactome" id="R-CEL-983189">
    <property type="pathway name" value="Kinesins"/>
</dbReference>
<dbReference type="PRO" id="PR:G5EGS3"/>
<dbReference type="Proteomes" id="UP000001940">
    <property type="component" value="Chromosome IV"/>
</dbReference>
<dbReference type="Bgee" id="WBGene00002223">
    <property type="expression patterns" value="Expressed in pharyngeal muscle cell (C elegans) and 5 other cell types or tissues"/>
</dbReference>
<dbReference type="ExpressionAtlas" id="G5EGS3">
    <property type="expression patterns" value="baseline and differential"/>
</dbReference>
<dbReference type="GO" id="GO:0005737">
    <property type="term" value="C:cytoplasm"/>
    <property type="evidence" value="ECO:0000318"/>
    <property type="project" value="GO_Central"/>
</dbReference>
<dbReference type="GO" id="GO:0005871">
    <property type="term" value="C:kinesin complex"/>
    <property type="evidence" value="ECO:0000318"/>
    <property type="project" value="GO_Central"/>
</dbReference>
<dbReference type="GO" id="GO:0005874">
    <property type="term" value="C:microtubule"/>
    <property type="evidence" value="ECO:0000318"/>
    <property type="project" value="GO_Central"/>
</dbReference>
<dbReference type="GO" id="GO:0005524">
    <property type="term" value="F:ATP binding"/>
    <property type="evidence" value="ECO:0007669"/>
    <property type="project" value="UniProtKB-KW"/>
</dbReference>
<dbReference type="GO" id="GO:0016887">
    <property type="term" value="F:ATP hydrolysis activity"/>
    <property type="evidence" value="ECO:0000318"/>
    <property type="project" value="GO_Central"/>
</dbReference>
<dbReference type="GO" id="GO:0008017">
    <property type="term" value="F:microtubule binding"/>
    <property type="evidence" value="ECO:0000318"/>
    <property type="project" value="GO_Central"/>
</dbReference>
<dbReference type="GO" id="GO:0003777">
    <property type="term" value="F:microtubule motor activity"/>
    <property type="evidence" value="ECO:0000318"/>
    <property type="project" value="GO_Central"/>
</dbReference>
<dbReference type="GO" id="GO:0007018">
    <property type="term" value="P:microtubule-based movement"/>
    <property type="evidence" value="ECO:0000318"/>
    <property type="project" value="GO_Central"/>
</dbReference>
<dbReference type="CDD" id="cd01372">
    <property type="entry name" value="KISc_KIF4"/>
    <property type="match status" value="1"/>
</dbReference>
<dbReference type="CDD" id="cd22248">
    <property type="entry name" value="Rcc_KIF21"/>
    <property type="match status" value="1"/>
</dbReference>
<dbReference type="CDD" id="cd00200">
    <property type="entry name" value="WD40"/>
    <property type="match status" value="1"/>
</dbReference>
<dbReference type="FunFam" id="3.40.850.10:FF:000011">
    <property type="entry name" value="Kinesin family member 21A"/>
    <property type="match status" value="1"/>
</dbReference>
<dbReference type="FunFam" id="2.130.10.10:FF:001550">
    <property type="entry name" value="Kinesin-like protein"/>
    <property type="match status" value="1"/>
</dbReference>
<dbReference type="FunFam" id="2.130.10.10:FF:002178">
    <property type="entry name" value="Kinesin-like protein"/>
    <property type="match status" value="1"/>
</dbReference>
<dbReference type="Gene3D" id="3.40.850.10">
    <property type="entry name" value="Kinesin motor domain"/>
    <property type="match status" value="1"/>
</dbReference>
<dbReference type="Gene3D" id="2.130.10.10">
    <property type="entry name" value="YVTN repeat-like/Quinoprotein amine dehydrogenase"/>
    <property type="match status" value="2"/>
</dbReference>
<dbReference type="InterPro" id="IPR056532">
    <property type="entry name" value="KIF21A/B_hel_2"/>
</dbReference>
<dbReference type="InterPro" id="IPR027640">
    <property type="entry name" value="Kinesin-like_fam"/>
</dbReference>
<dbReference type="InterPro" id="IPR019821">
    <property type="entry name" value="Kinesin_motor_CS"/>
</dbReference>
<dbReference type="InterPro" id="IPR001752">
    <property type="entry name" value="Kinesin_motor_dom"/>
</dbReference>
<dbReference type="InterPro" id="IPR036961">
    <property type="entry name" value="Kinesin_motor_dom_sf"/>
</dbReference>
<dbReference type="InterPro" id="IPR027417">
    <property type="entry name" value="P-loop_NTPase"/>
</dbReference>
<dbReference type="InterPro" id="IPR015943">
    <property type="entry name" value="WD40/YVTN_repeat-like_dom_sf"/>
</dbReference>
<dbReference type="InterPro" id="IPR019775">
    <property type="entry name" value="WD40_repeat_CS"/>
</dbReference>
<dbReference type="InterPro" id="IPR036322">
    <property type="entry name" value="WD40_repeat_dom_sf"/>
</dbReference>
<dbReference type="InterPro" id="IPR001680">
    <property type="entry name" value="WD40_rpt"/>
</dbReference>
<dbReference type="PANTHER" id="PTHR47969">
    <property type="entry name" value="CHROMOSOME-ASSOCIATED KINESIN KIF4A-RELATED"/>
    <property type="match status" value="1"/>
</dbReference>
<dbReference type="PANTHER" id="PTHR47969:SF28">
    <property type="entry name" value="KINESIN-LIKE PROTEIN KIF21B"/>
    <property type="match status" value="1"/>
</dbReference>
<dbReference type="Pfam" id="PF23203">
    <property type="entry name" value="KIF21A"/>
    <property type="match status" value="1"/>
</dbReference>
<dbReference type="Pfam" id="PF00225">
    <property type="entry name" value="Kinesin"/>
    <property type="match status" value="1"/>
</dbReference>
<dbReference type="Pfam" id="PF00400">
    <property type="entry name" value="WD40"/>
    <property type="match status" value="2"/>
</dbReference>
<dbReference type="PRINTS" id="PR00380">
    <property type="entry name" value="KINESINHEAVY"/>
</dbReference>
<dbReference type="SMART" id="SM00129">
    <property type="entry name" value="KISc"/>
    <property type="match status" value="1"/>
</dbReference>
<dbReference type="SMART" id="SM00320">
    <property type="entry name" value="WD40"/>
    <property type="match status" value="6"/>
</dbReference>
<dbReference type="SUPFAM" id="SSF52540">
    <property type="entry name" value="P-loop containing nucleoside triphosphate hydrolases"/>
    <property type="match status" value="1"/>
</dbReference>
<dbReference type="SUPFAM" id="SSF50978">
    <property type="entry name" value="WD40 repeat-like"/>
    <property type="match status" value="1"/>
</dbReference>
<dbReference type="PROSITE" id="PS00411">
    <property type="entry name" value="KINESIN_MOTOR_1"/>
    <property type="match status" value="1"/>
</dbReference>
<dbReference type="PROSITE" id="PS50067">
    <property type="entry name" value="KINESIN_MOTOR_2"/>
    <property type="match status" value="1"/>
</dbReference>
<dbReference type="PROSITE" id="PS00678">
    <property type="entry name" value="WD_REPEATS_1"/>
    <property type="match status" value="2"/>
</dbReference>
<dbReference type="PROSITE" id="PS50082">
    <property type="entry name" value="WD_REPEATS_2"/>
    <property type="match status" value="2"/>
</dbReference>
<dbReference type="PROSITE" id="PS50294">
    <property type="entry name" value="WD_REPEATS_REGION"/>
    <property type="match status" value="1"/>
</dbReference>